<accession>Q5VR89</accession>
<accession>B7EZ27</accession>
<accession>Q9AWM0</accession>
<sequence length="246" mass="26052">MAVAAVRAAAADAAVTFLWVLCVSTLGASTAAVTSYLRIHEGIHYALLVTVSLLSVLLFAFNLLCDALGGASFNPTALAAFHAAGLSSPRHSSLFPLALRFPAQAAGAVGGAMAISELMPEQYKHMLGGPSLKVDLHTGAAAELVLTFVITLAVLWIIVKGPRNPIVKTWMLSISTVCLVLTGAAYTGPSMNPANAFGWAYVNNRHNTWEQFYVYWICPFVGAVLAAWVFRAVFPPPAPKPKAKKA</sequence>
<keyword id="KW-0472">Membrane</keyword>
<keyword id="KW-1185">Reference proteome</keyword>
<keyword id="KW-0677">Repeat</keyword>
<keyword id="KW-0812">Transmembrane</keyword>
<keyword id="KW-1133">Transmembrane helix</keyword>
<keyword id="KW-0813">Transport</keyword>
<gene>
    <name type="primary">SIP1-1</name>
    <name type="ordered locus">Os01g0182200</name>
    <name type="ordered locus">LOC_Os01g08660</name>
    <name type="ORF">OsJ_000627</name>
    <name type="ORF">P0666G04.23-1</name>
    <name type="ORF">P0666G04.23-2</name>
</gene>
<name>SIP11_ORYSJ</name>
<protein>
    <recommendedName>
        <fullName>Aquaporin SIP1-1</fullName>
    </recommendedName>
    <alternativeName>
        <fullName>OsSIP1;1</fullName>
    </alternativeName>
    <alternativeName>
        <fullName>Small basic intrinsic protein 1-1</fullName>
    </alternativeName>
</protein>
<proteinExistence type="evidence at transcript level"/>
<organism>
    <name type="scientific">Oryza sativa subsp. japonica</name>
    <name type="common">Rice</name>
    <dbReference type="NCBI Taxonomy" id="39947"/>
    <lineage>
        <taxon>Eukaryota</taxon>
        <taxon>Viridiplantae</taxon>
        <taxon>Streptophyta</taxon>
        <taxon>Embryophyta</taxon>
        <taxon>Tracheophyta</taxon>
        <taxon>Spermatophyta</taxon>
        <taxon>Magnoliopsida</taxon>
        <taxon>Liliopsida</taxon>
        <taxon>Poales</taxon>
        <taxon>Poaceae</taxon>
        <taxon>BOP clade</taxon>
        <taxon>Oryzoideae</taxon>
        <taxon>Oryzeae</taxon>
        <taxon>Oryzinae</taxon>
        <taxon>Oryza</taxon>
        <taxon>Oryza sativa</taxon>
    </lineage>
</organism>
<reference key="1">
    <citation type="journal article" date="2002" name="Nature">
        <title>The genome sequence and structure of rice chromosome 1.</title>
        <authorList>
            <person name="Sasaki T."/>
            <person name="Matsumoto T."/>
            <person name="Yamamoto K."/>
            <person name="Sakata K."/>
            <person name="Baba T."/>
            <person name="Katayose Y."/>
            <person name="Wu J."/>
            <person name="Niimura Y."/>
            <person name="Cheng Z."/>
            <person name="Nagamura Y."/>
            <person name="Antonio B.A."/>
            <person name="Kanamori H."/>
            <person name="Hosokawa S."/>
            <person name="Masukawa M."/>
            <person name="Arikawa K."/>
            <person name="Chiden Y."/>
            <person name="Hayashi M."/>
            <person name="Okamoto M."/>
            <person name="Ando T."/>
            <person name="Aoki H."/>
            <person name="Arita K."/>
            <person name="Hamada M."/>
            <person name="Harada C."/>
            <person name="Hijishita S."/>
            <person name="Honda M."/>
            <person name="Ichikawa Y."/>
            <person name="Idonuma A."/>
            <person name="Iijima M."/>
            <person name="Ikeda M."/>
            <person name="Ikeno M."/>
            <person name="Ito S."/>
            <person name="Ito T."/>
            <person name="Ito Y."/>
            <person name="Ito Y."/>
            <person name="Iwabuchi A."/>
            <person name="Kamiya K."/>
            <person name="Karasawa W."/>
            <person name="Katagiri S."/>
            <person name="Kikuta A."/>
            <person name="Kobayashi N."/>
            <person name="Kono I."/>
            <person name="Machita K."/>
            <person name="Maehara T."/>
            <person name="Mizuno H."/>
            <person name="Mizubayashi T."/>
            <person name="Mukai Y."/>
            <person name="Nagasaki H."/>
            <person name="Nakashima M."/>
            <person name="Nakama Y."/>
            <person name="Nakamichi Y."/>
            <person name="Nakamura M."/>
            <person name="Namiki N."/>
            <person name="Negishi M."/>
            <person name="Ohta I."/>
            <person name="Ono N."/>
            <person name="Saji S."/>
            <person name="Sakai K."/>
            <person name="Shibata M."/>
            <person name="Shimokawa T."/>
            <person name="Shomura A."/>
            <person name="Song J."/>
            <person name="Takazaki Y."/>
            <person name="Terasawa K."/>
            <person name="Tsuji K."/>
            <person name="Waki K."/>
            <person name="Yamagata H."/>
            <person name="Yamane H."/>
            <person name="Yoshiki S."/>
            <person name="Yoshihara R."/>
            <person name="Yukawa K."/>
            <person name="Zhong H."/>
            <person name="Iwama H."/>
            <person name="Endo T."/>
            <person name="Ito H."/>
            <person name="Hahn J.H."/>
            <person name="Kim H.-I."/>
            <person name="Eun M.-Y."/>
            <person name="Yano M."/>
            <person name="Jiang J."/>
            <person name="Gojobori T."/>
        </authorList>
    </citation>
    <scope>NUCLEOTIDE SEQUENCE [LARGE SCALE GENOMIC DNA]</scope>
    <source>
        <strain>cv. Nipponbare</strain>
    </source>
</reference>
<reference key="2">
    <citation type="journal article" date="2005" name="Nature">
        <title>The map-based sequence of the rice genome.</title>
        <authorList>
            <consortium name="International rice genome sequencing project (IRGSP)"/>
        </authorList>
    </citation>
    <scope>NUCLEOTIDE SEQUENCE [LARGE SCALE GENOMIC DNA]</scope>
    <source>
        <strain>cv. Nipponbare</strain>
    </source>
</reference>
<reference key="3">
    <citation type="journal article" date="2008" name="Nucleic Acids Res.">
        <title>The rice annotation project database (RAP-DB): 2008 update.</title>
        <authorList>
            <consortium name="The rice annotation project (RAP)"/>
        </authorList>
    </citation>
    <scope>GENOME REANNOTATION</scope>
    <source>
        <strain>cv. Nipponbare</strain>
    </source>
</reference>
<reference key="4">
    <citation type="journal article" date="2013" name="Rice">
        <title>Improvement of the Oryza sativa Nipponbare reference genome using next generation sequence and optical map data.</title>
        <authorList>
            <person name="Kawahara Y."/>
            <person name="de la Bastide M."/>
            <person name="Hamilton J.P."/>
            <person name="Kanamori H."/>
            <person name="McCombie W.R."/>
            <person name="Ouyang S."/>
            <person name="Schwartz D.C."/>
            <person name="Tanaka T."/>
            <person name="Wu J."/>
            <person name="Zhou S."/>
            <person name="Childs K.L."/>
            <person name="Davidson R.M."/>
            <person name="Lin H."/>
            <person name="Quesada-Ocampo L."/>
            <person name="Vaillancourt B."/>
            <person name="Sakai H."/>
            <person name="Lee S.S."/>
            <person name="Kim J."/>
            <person name="Numa H."/>
            <person name="Itoh T."/>
            <person name="Buell C.R."/>
            <person name="Matsumoto T."/>
        </authorList>
    </citation>
    <scope>GENOME REANNOTATION</scope>
    <source>
        <strain>cv. Nipponbare</strain>
    </source>
</reference>
<reference key="5">
    <citation type="journal article" date="2005" name="PLoS Biol.">
        <title>The genomes of Oryza sativa: a history of duplications.</title>
        <authorList>
            <person name="Yu J."/>
            <person name="Wang J."/>
            <person name="Lin W."/>
            <person name="Li S."/>
            <person name="Li H."/>
            <person name="Zhou J."/>
            <person name="Ni P."/>
            <person name="Dong W."/>
            <person name="Hu S."/>
            <person name="Zeng C."/>
            <person name="Zhang J."/>
            <person name="Zhang Y."/>
            <person name="Li R."/>
            <person name="Xu Z."/>
            <person name="Li S."/>
            <person name="Li X."/>
            <person name="Zheng H."/>
            <person name="Cong L."/>
            <person name="Lin L."/>
            <person name="Yin J."/>
            <person name="Geng J."/>
            <person name="Li G."/>
            <person name="Shi J."/>
            <person name="Liu J."/>
            <person name="Lv H."/>
            <person name="Li J."/>
            <person name="Wang J."/>
            <person name="Deng Y."/>
            <person name="Ran L."/>
            <person name="Shi X."/>
            <person name="Wang X."/>
            <person name="Wu Q."/>
            <person name="Li C."/>
            <person name="Ren X."/>
            <person name="Wang J."/>
            <person name="Wang X."/>
            <person name="Li D."/>
            <person name="Liu D."/>
            <person name="Zhang X."/>
            <person name="Ji Z."/>
            <person name="Zhao W."/>
            <person name="Sun Y."/>
            <person name="Zhang Z."/>
            <person name="Bao J."/>
            <person name="Han Y."/>
            <person name="Dong L."/>
            <person name="Ji J."/>
            <person name="Chen P."/>
            <person name="Wu S."/>
            <person name="Liu J."/>
            <person name="Xiao Y."/>
            <person name="Bu D."/>
            <person name="Tan J."/>
            <person name="Yang L."/>
            <person name="Ye C."/>
            <person name="Zhang J."/>
            <person name="Xu J."/>
            <person name="Zhou Y."/>
            <person name="Yu Y."/>
            <person name="Zhang B."/>
            <person name="Zhuang S."/>
            <person name="Wei H."/>
            <person name="Liu B."/>
            <person name="Lei M."/>
            <person name="Yu H."/>
            <person name="Li Y."/>
            <person name="Xu H."/>
            <person name="Wei S."/>
            <person name="He X."/>
            <person name="Fang L."/>
            <person name="Zhang Z."/>
            <person name="Zhang Y."/>
            <person name="Huang X."/>
            <person name="Su Z."/>
            <person name="Tong W."/>
            <person name="Li J."/>
            <person name="Tong Z."/>
            <person name="Li S."/>
            <person name="Ye J."/>
            <person name="Wang L."/>
            <person name="Fang L."/>
            <person name="Lei T."/>
            <person name="Chen C.-S."/>
            <person name="Chen H.-C."/>
            <person name="Xu Z."/>
            <person name="Li H."/>
            <person name="Huang H."/>
            <person name="Zhang F."/>
            <person name="Xu H."/>
            <person name="Li N."/>
            <person name="Zhao C."/>
            <person name="Li S."/>
            <person name="Dong L."/>
            <person name="Huang Y."/>
            <person name="Li L."/>
            <person name="Xi Y."/>
            <person name="Qi Q."/>
            <person name="Li W."/>
            <person name="Zhang B."/>
            <person name="Hu W."/>
            <person name="Zhang Y."/>
            <person name="Tian X."/>
            <person name="Jiao Y."/>
            <person name="Liang X."/>
            <person name="Jin J."/>
            <person name="Gao L."/>
            <person name="Zheng W."/>
            <person name="Hao B."/>
            <person name="Liu S.-M."/>
            <person name="Wang W."/>
            <person name="Yuan L."/>
            <person name="Cao M."/>
            <person name="McDermott J."/>
            <person name="Samudrala R."/>
            <person name="Wang J."/>
            <person name="Wong G.K.-S."/>
            <person name="Yang H."/>
        </authorList>
    </citation>
    <scope>NUCLEOTIDE SEQUENCE [LARGE SCALE GENOMIC DNA]</scope>
    <source>
        <strain>cv. Nipponbare</strain>
    </source>
</reference>
<reference key="6">
    <citation type="journal article" date="2003" name="Science">
        <title>Collection, mapping, and annotation of over 28,000 cDNA clones from japonica rice.</title>
        <authorList>
            <consortium name="The rice full-length cDNA consortium"/>
        </authorList>
    </citation>
    <scope>NUCLEOTIDE SEQUENCE [LARGE SCALE MRNA]</scope>
    <source>
        <strain>cv. Nipponbare</strain>
    </source>
</reference>
<reference key="7">
    <citation type="journal article" date="2005" name="Plant Cell Physiol.">
        <title>Identification of 33 rice aquaporin genes and analysis of their expression and function.</title>
        <authorList>
            <person name="Sakurai J."/>
            <person name="Ishikawa F."/>
            <person name="Yamaguchi T."/>
            <person name="Uemura M."/>
            <person name="Maeshima M."/>
        </authorList>
    </citation>
    <scope>NOMENCLATURE</scope>
    <scope>TISSUE SPECIFICITY</scope>
</reference>
<comment type="function">
    <text evidence="1">Aquaporins facilitate the transport of water and small neutral solutes across cell membranes.</text>
</comment>
<comment type="subcellular location">
    <subcellularLocation>
        <location evidence="4">Membrane</location>
        <topology evidence="4">Multi-pass membrane protein</topology>
    </subcellularLocation>
</comment>
<comment type="tissue specificity">
    <text evidence="3">Expressed in roots, leaves and anthers.</text>
</comment>
<comment type="domain">
    <text>Aquaporins contain two tandem repeats each containing three membrane-spanning domains and a pore-forming loop with the signature motif Asn-Pro-Ala (NPA).</text>
</comment>
<comment type="similarity">
    <text evidence="4">Belongs to the MIP/aquaporin (TC 1.A.8) family. SIP (TC 1.A.8.10) subfamily.</text>
</comment>
<comment type="sequence caution" evidence="4">
    <conflict type="erroneous gene model prediction">
        <sequence resource="EMBL-CDS" id="BAD68048"/>
    </conflict>
</comment>
<dbReference type="EMBL" id="AP003047">
    <property type="protein sequence ID" value="BAB32914.1"/>
    <property type="molecule type" value="Genomic_DNA"/>
</dbReference>
<dbReference type="EMBL" id="AP003047">
    <property type="protein sequence ID" value="BAD68048.1"/>
    <property type="status" value="ALT_SEQ"/>
    <property type="molecule type" value="Genomic_DNA"/>
</dbReference>
<dbReference type="EMBL" id="AP008207">
    <property type="protein sequence ID" value="BAF04130.1"/>
    <property type="molecule type" value="Genomic_DNA"/>
</dbReference>
<dbReference type="EMBL" id="AP014957">
    <property type="protein sequence ID" value="BAS70739.1"/>
    <property type="molecule type" value="Genomic_DNA"/>
</dbReference>
<dbReference type="EMBL" id="CM000138">
    <property type="protein sequence ID" value="EAZ10802.1"/>
    <property type="molecule type" value="Genomic_DNA"/>
</dbReference>
<dbReference type="EMBL" id="AK106185">
    <property type="protein sequence ID" value="BAG97624.1"/>
    <property type="molecule type" value="mRNA"/>
</dbReference>
<dbReference type="EMBL" id="AK109424">
    <property type="protein sequence ID" value="BAG98737.1"/>
    <property type="molecule type" value="mRNA"/>
</dbReference>
<dbReference type="RefSeq" id="XP_015621893.1">
    <property type="nucleotide sequence ID" value="XM_015766407.1"/>
</dbReference>
<dbReference type="SMR" id="Q5VR89"/>
<dbReference type="FunCoup" id="Q5VR89">
    <property type="interactions" value="37"/>
</dbReference>
<dbReference type="STRING" id="39947.Q5VR89"/>
<dbReference type="PaxDb" id="39947-Q5VR89"/>
<dbReference type="EnsemblPlants" id="Os01t0182200-02">
    <property type="protein sequence ID" value="Os01t0182200-02"/>
    <property type="gene ID" value="Os01g0182200"/>
</dbReference>
<dbReference type="Gramene" id="Os01t0182200-02">
    <property type="protein sequence ID" value="Os01t0182200-02"/>
    <property type="gene ID" value="Os01g0182200"/>
</dbReference>
<dbReference type="KEGG" id="dosa:Os01g0182200"/>
<dbReference type="eggNOG" id="KOG0223">
    <property type="taxonomic scope" value="Eukaryota"/>
</dbReference>
<dbReference type="HOGENOM" id="CLU_100006_0_0_1"/>
<dbReference type="InParanoid" id="Q5VR89"/>
<dbReference type="OMA" id="YVYWITP"/>
<dbReference type="OrthoDB" id="3222at2759"/>
<dbReference type="Proteomes" id="UP000000763">
    <property type="component" value="Chromosome 1"/>
</dbReference>
<dbReference type="Proteomes" id="UP000007752">
    <property type="component" value="Chromosome 1"/>
</dbReference>
<dbReference type="Proteomes" id="UP000059680">
    <property type="component" value="Chromosome 1"/>
</dbReference>
<dbReference type="ExpressionAtlas" id="Q5VR89">
    <property type="expression patterns" value="baseline and differential"/>
</dbReference>
<dbReference type="GO" id="GO:0016020">
    <property type="term" value="C:membrane"/>
    <property type="evidence" value="ECO:0007669"/>
    <property type="project" value="UniProtKB-SubCell"/>
</dbReference>
<dbReference type="GO" id="GO:0015250">
    <property type="term" value="F:water channel activity"/>
    <property type="evidence" value="ECO:0007669"/>
    <property type="project" value="InterPro"/>
</dbReference>
<dbReference type="FunFam" id="1.20.1080.10:FF:000043">
    <property type="entry name" value="Aquaporin SIP1-1"/>
    <property type="match status" value="1"/>
</dbReference>
<dbReference type="Gene3D" id="1.20.1080.10">
    <property type="entry name" value="Glycerol uptake facilitator protein"/>
    <property type="match status" value="1"/>
</dbReference>
<dbReference type="InterPro" id="IPR023271">
    <property type="entry name" value="Aquaporin-like"/>
</dbReference>
<dbReference type="InterPro" id="IPR000425">
    <property type="entry name" value="MIP"/>
</dbReference>
<dbReference type="InterPro" id="IPR044222">
    <property type="entry name" value="SIP1-1/2-like"/>
</dbReference>
<dbReference type="PANTHER" id="PTHR46739">
    <property type="entry name" value="AQUAPORIN SIP1-1"/>
    <property type="match status" value="1"/>
</dbReference>
<dbReference type="PANTHER" id="PTHR46739:SF3">
    <property type="entry name" value="AQUAPORIN SIP1-1"/>
    <property type="match status" value="1"/>
</dbReference>
<dbReference type="Pfam" id="PF00230">
    <property type="entry name" value="MIP"/>
    <property type="match status" value="1"/>
</dbReference>
<dbReference type="PRINTS" id="PR00783">
    <property type="entry name" value="MINTRINSICP"/>
</dbReference>
<dbReference type="SUPFAM" id="SSF81338">
    <property type="entry name" value="Aquaporin-like"/>
    <property type="match status" value="1"/>
</dbReference>
<feature type="chain" id="PRO_0000286041" description="Aquaporin SIP1-1">
    <location>
        <begin position="1"/>
        <end position="246"/>
    </location>
</feature>
<feature type="transmembrane region" description="Helical; Name=1" evidence="2">
    <location>
        <begin position="13"/>
        <end position="33"/>
    </location>
</feature>
<feature type="transmembrane region" description="Helical; Name=2" evidence="2">
    <location>
        <begin position="45"/>
        <end position="65"/>
    </location>
</feature>
<feature type="transmembrane region" description="Helical; Name=3" evidence="2">
    <location>
        <begin position="95"/>
        <end position="115"/>
    </location>
</feature>
<feature type="transmembrane region" description="Helical; Name=4" evidence="2">
    <location>
        <begin position="139"/>
        <end position="159"/>
    </location>
</feature>
<feature type="transmembrane region" description="Helical; Name=5" evidence="2">
    <location>
        <begin position="166"/>
        <end position="186"/>
    </location>
</feature>
<feature type="transmembrane region" description="Helical; Name=6" evidence="2">
    <location>
        <begin position="214"/>
        <end position="234"/>
    </location>
</feature>
<feature type="short sequence motif" description="NPA 1">
    <location>
        <begin position="74"/>
        <end position="76"/>
    </location>
</feature>
<feature type="short sequence motif" description="NPA 2">
    <location>
        <begin position="192"/>
        <end position="194"/>
    </location>
</feature>
<evidence type="ECO:0000250" key="1"/>
<evidence type="ECO:0000255" key="2"/>
<evidence type="ECO:0000269" key="3">
    <source>
    </source>
</evidence>
<evidence type="ECO:0000305" key="4"/>